<dbReference type="EMBL" id="X63207">
    <property type="protein sequence ID" value="CAA44892.1"/>
    <property type="molecule type" value="Genomic_DNA"/>
</dbReference>
<dbReference type="PIR" id="S23700">
    <property type="entry name" value="S23700"/>
</dbReference>
<dbReference type="SMR" id="P40128"/>
<dbReference type="GO" id="GO:0005829">
    <property type="term" value="C:cytosol"/>
    <property type="evidence" value="ECO:0007669"/>
    <property type="project" value="TreeGrafter"/>
</dbReference>
<dbReference type="GO" id="GO:0008199">
    <property type="term" value="F:ferric iron binding"/>
    <property type="evidence" value="ECO:0007669"/>
    <property type="project" value="InterPro"/>
</dbReference>
<dbReference type="GO" id="GO:0008198">
    <property type="term" value="F:ferrous iron binding"/>
    <property type="evidence" value="ECO:0007669"/>
    <property type="project" value="TreeGrafter"/>
</dbReference>
<dbReference type="GO" id="GO:0016226">
    <property type="term" value="P:iron-sulfur cluster assembly"/>
    <property type="evidence" value="ECO:0007669"/>
    <property type="project" value="UniProtKB-UniRule"/>
</dbReference>
<dbReference type="CDD" id="cd00503">
    <property type="entry name" value="Frataxin"/>
    <property type="match status" value="1"/>
</dbReference>
<dbReference type="Gene3D" id="3.30.920.10">
    <property type="entry name" value="Frataxin/CyaY"/>
    <property type="match status" value="1"/>
</dbReference>
<dbReference type="HAMAP" id="MF_00142">
    <property type="entry name" value="CyaY"/>
    <property type="match status" value="1"/>
</dbReference>
<dbReference type="InterPro" id="IPR047584">
    <property type="entry name" value="CyaY"/>
</dbReference>
<dbReference type="InterPro" id="IPR002908">
    <property type="entry name" value="Frataxin/CyaY"/>
</dbReference>
<dbReference type="InterPro" id="IPR036524">
    <property type="entry name" value="Frataxin/CyaY_sf"/>
</dbReference>
<dbReference type="InterPro" id="IPR020895">
    <property type="entry name" value="Frataxin_CS"/>
</dbReference>
<dbReference type="NCBIfam" id="TIGR03421">
    <property type="entry name" value="FeS_CyaY"/>
    <property type="match status" value="1"/>
</dbReference>
<dbReference type="PANTHER" id="PTHR16821">
    <property type="entry name" value="FRATAXIN"/>
    <property type="match status" value="1"/>
</dbReference>
<dbReference type="PANTHER" id="PTHR16821:SF2">
    <property type="entry name" value="FRATAXIN, MITOCHONDRIAL"/>
    <property type="match status" value="1"/>
</dbReference>
<dbReference type="Pfam" id="PF01491">
    <property type="entry name" value="Frataxin_Cyay"/>
    <property type="match status" value="1"/>
</dbReference>
<dbReference type="SMART" id="SM01219">
    <property type="entry name" value="Frataxin_Cyay"/>
    <property type="match status" value="1"/>
</dbReference>
<dbReference type="SUPFAM" id="SSF55387">
    <property type="entry name" value="Frataxin/Nqo15-like"/>
    <property type="match status" value="1"/>
</dbReference>
<dbReference type="PROSITE" id="PS01344">
    <property type="entry name" value="FRATAXIN_1"/>
    <property type="match status" value="1"/>
</dbReference>
<dbReference type="PROSITE" id="PS50810">
    <property type="entry name" value="FRATAXIN_2"/>
    <property type="match status" value="1"/>
</dbReference>
<gene>
    <name evidence="1" type="primary">cyaY</name>
</gene>
<reference key="1">
    <citation type="journal article" date="1988" name="Second Messengers Phosphoproteins">
        <title>Structure and evolution of bacterial adenylate cyclase: comparison between Escherichia coli and Erwinia chrysanthemi.</title>
        <authorList>
            <person name="Danchin A."/>
            <person name="Lenzen G."/>
        </authorList>
    </citation>
    <scope>NUCLEOTIDE SEQUENCE [GENOMIC DNA]</scope>
    <source>
        <strain>B374</strain>
    </source>
</reference>
<accession>P40128</accession>
<protein>
    <recommendedName>
        <fullName evidence="1">Iron-sulfur cluster assembly protein CyaY</fullName>
    </recommendedName>
</protein>
<name>CYAY_DICCH</name>
<keyword id="KW-0408">Iron</keyword>
<keyword id="KW-0479">Metal-binding</keyword>
<proteinExistence type="inferred from homology"/>
<comment type="function">
    <text evidence="1">Involved in iron-sulfur (Fe-S) cluster assembly. May act as a regulator of Fe-S biogenesis.</text>
</comment>
<comment type="similarity">
    <text evidence="1 2">Belongs to the frataxin family.</text>
</comment>
<feature type="chain" id="PRO_0000193939" description="Iron-sulfur cluster assembly protein CyaY">
    <location>
        <begin position="1"/>
        <end position="106"/>
    </location>
</feature>
<organism>
    <name type="scientific">Dickeya chrysanthemi</name>
    <name type="common">Pectobacterium chrysanthemi</name>
    <name type="synonym">Erwinia chrysanthemi</name>
    <dbReference type="NCBI Taxonomy" id="556"/>
    <lineage>
        <taxon>Bacteria</taxon>
        <taxon>Pseudomonadati</taxon>
        <taxon>Pseudomonadota</taxon>
        <taxon>Gammaproteobacteria</taxon>
        <taxon>Enterobacterales</taxon>
        <taxon>Pectobacteriaceae</taxon>
        <taxon>Dickeya</taxon>
    </lineage>
</organism>
<sequence length="106" mass="12036">MNDSEFHQLADTLMLKVEETLDQFDGDADIDYETNGGVMTLSFENGSKIVINRQEPMHQVWLATKGGGYHFDYQHGRWICDRSGSDFMALLAQACTEQSGEEIHFD</sequence>
<evidence type="ECO:0000255" key="1">
    <source>
        <dbReference type="HAMAP-Rule" id="MF_00142"/>
    </source>
</evidence>
<evidence type="ECO:0000305" key="2"/>